<sequence>MLDATLKSQLKTYLERVTQPIEIVASLDDGAKSRELHDLLVEIASLSNLITFSADGTDARRPSFSLNRPGADISLRFAGIPMGHEFTSLVLALLQVGGHPSKASAEVIEQIQALEGEFNFETYFSLSCQNCPDVVQALNLMAVLNPNVRHVAIDGALFQDEVESRKIMAVPSIYLNGEVFGQGRMGLEEILGKIDTNAGARQAEKINAKEAFDVLVVGGGPAGAAAAIYAARKGIRTGVAAERFGGQVLDTLAIENFISVQETEGPKLATALEEHVKQYDVDIMNLQRGEALIPAAEGGLHEVRLAGGASLKAKTVILATGARWREMNVPGEQEYRGRGVAYCPHCDGPLFKGKRVAVIGGGNSGVEAAIDLAGIVAQVTLIEFDSQLRADAVLQRKLRSLPNVNVITSALTTEVLGNGEKVTGLRYKDRSTDEQHEVALEGIFVQIGLLPNTDWLKGTVELSPRGEIIVDAKGQTSIPGVFAAGDVTTVPYKQIVIAVGEGAKASLAAFDHLIRTSAPA</sequence>
<reference key="1">
    <citation type="journal article" date="1998" name="Extremophiles">
        <title>Isolation and transposon mutagenesis of a Pseudomonas putida KT2442 toluene-resistant variant: involvement of an efflux system in solvent resistance.</title>
        <authorList>
            <person name="Fukumori F."/>
            <person name="Hirayama H."/>
            <person name="Takami H."/>
            <person name="Inoue A."/>
            <person name="Horikoshi K."/>
        </authorList>
    </citation>
    <scope>NUCLEOTIDE SEQUENCE [GENOMIC DNA]</scope>
    <source>
        <strain>KT2442-TOL</strain>
    </source>
</reference>
<comment type="function">
    <text>Serves to protect the cell against DNA damage by alkyl hydroperoxides. It can use either NADH or NADPH as electron donor for direct reduction of redox dyes or of alkyl hydroperoxides when combined with the AhpC protein.</text>
</comment>
<comment type="cofactor">
    <cofactor evidence="1">
        <name>FAD</name>
        <dbReference type="ChEBI" id="CHEBI:57692"/>
    </cofactor>
    <text evidence="1">Binds 1 FAD per subunit.</text>
</comment>
<comment type="subunit">
    <text evidence="1">Homodimer.</text>
</comment>
<comment type="miscellaneous">
    <text>The active site is a redox-active disulfide bond.</text>
</comment>
<comment type="similarity">
    <text evidence="2">Belongs to the class-II pyridine nucleotide-disulfide oxidoreductase family.</text>
</comment>
<name>AHPF_PSEPU</name>
<accession>P0A156</accession>
<accession>O82864</accession>
<keyword id="KW-1015">Disulfide bond</keyword>
<keyword id="KW-0274">FAD</keyword>
<keyword id="KW-0285">Flavoprotein</keyword>
<keyword id="KW-0520">NAD</keyword>
<keyword id="KW-0521">NADP</keyword>
<keyword id="KW-0560">Oxidoreductase</keyword>
<keyword id="KW-0676">Redox-active center</keyword>
<proteinExistence type="inferred from homology"/>
<evidence type="ECO:0000250" key="1"/>
<evidence type="ECO:0000305" key="2"/>
<gene>
    <name type="primary">ahpF</name>
</gene>
<organism>
    <name type="scientific">Pseudomonas putida</name>
    <name type="common">Arthrobacter siderocapsulatus</name>
    <dbReference type="NCBI Taxonomy" id="303"/>
    <lineage>
        <taxon>Bacteria</taxon>
        <taxon>Pseudomonadati</taxon>
        <taxon>Pseudomonadota</taxon>
        <taxon>Gammaproteobacteria</taxon>
        <taxon>Pseudomonadales</taxon>
        <taxon>Pseudomonadaceae</taxon>
        <taxon>Pseudomonas</taxon>
    </lineage>
</organism>
<protein>
    <recommendedName>
        <fullName>Alkyl hydroperoxide reductase subunit F</fullName>
        <ecNumber>1.8.1.-</ecNumber>
    </recommendedName>
</protein>
<dbReference type="EC" id="1.8.1.-"/>
<dbReference type="EMBL" id="AB010689">
    <property type="protein sequence ID" value="BAA31469.1"/>
    <property type="molecule type" value="Genomic_DNA"/>
</dbReference>
<dbReference type="RefSeq" id="WP_010953390.1">
    <property type="nucleotide sequence ID" value="NZ_LT852425.1"/>
</dbReference>
<dbReference type="SMR" id="P0A156"/>
<dbReference type="GeneID" id="83681042"/>
<dbReference type="PATRIC" id="fig|303.175.peg.816"/>
<dbReference type="eggNOG" id="COG3634">
    <property type="taxonomic scope" value="Bacteria"/>
</dbReference>
<dbReference type="GO" id="GO:0050660">
    <property type="term" value="F:flavin adenine dinucleotide binding"/>
    <property type="evidence" value="ECO:0007669"/>
    <property type="project" value="InterPro"/>
</dbReference>
<dbReference type="GO" id="GO:0051287">
    <property type="term" value="F:NAD binding"/>
    <property type="evidence" value="ECO:0007669"/>
    <property type="project" value="InterPro"/>
</dbReference>
<dbReference type="GO" id="GO:0102039">
    <property type="term" value="F:NADH-dependent peroxiredoxin activity"/>
    <property type="evidence" value="ECO:0007669"/>
    <property type="project" value="InterPro"/>
</dbReference>
<dbReference type="GO" id="GO:0016668">
    <property type="term" value="F:oxidoreductase activity, acting on a sulfur group of donors, NAD(P) as acceptor"/>
    <property type="evidence" value="ECO:0007669"/>
    <property type="project" value="UniProtKB-ARBA"/>
</dbReference>
<dbReference type="GO" id="GO:0000302">
    <property type="term" value="P:response to reactive oxygen species"/>
    <property type="evidence" value="ECO:0007669"/>
    <property type="project" value="InterPro"/>
</dbReference>
<dbReference type="CDD" id="cd03026">
    <property type="entry name" value="AhpF_NTD_C"/>
    <property type="match status" value="1"/>
</dbReference>
<dbReference type="CDD" id="cd02974">
    <property type="entry name" value="AhpF_NTD_N"/>
    <property type="match status" value="1"/>
</dbReference>
<dbReference type="FunFam" id="3.50.50.60:FF:000007">
    <property type="entry name" value="Alkyl hydroperoxide reductase, F subunit"/>
    <property type="match status" value="1"/>
</dbReference>
<dbReference type="Gene3D" id="3.40.30.80">
    <property type="match status" value="1"/>
</dbReference>
<dbReference type="Gene3D" id="3.50.50.60">
    <property type="entry name" value="FAD/NAD(P)-binding domain"/>
    <property type="match status" value="2"/>
</dbReference>
<dbReference type="InterPro" id="IPR044141">
    <property type="entry name" value="AhpF_NTD_C"/>
</dbReference>
<dbReference type="InterPro" id="IPR044142">
    <property type="entry name" value="AhpF_NTD_N"/>
</dbReference>
<dbReference type="InterPro" id="IPR012081">
    <property type="entry name" value="Alkyl_hydroperoxide_Rdtase_suF"/>
</dbReference>
<dbReference type="InterPro" id="IPR036188">
    <property type="entry name" value="FAD/NAD-bd_sf"/>
</dbReference>
<dbReference type="InterPro" id="IPR023753">
    <property type="entry name" value="FAD/NAD-binding_dom"/>
</dbReference>
<dbReference type="InterPro" id="IPR050097">
    <property type="entry name" value="Ferredoxin-NADP_redctase_2"/>
</dbReference>
<dbReference type="InterPro" id="IPR008255">
    <property type="entry name" value="Pyr_nucl-diS_OxRdtase_2_AS"/>
</dbReference>
<dbReference type="InterPro" id="IPR012336">
    <property type="entry name" value="Thioredoxin-like_fold"/>
</dbReference>
<dbReference type="InterPro" id="IPR036249">
    <property type="entry name" value="Thioredoxin-like_sf"/>
</dbReference>
<dbReference type="NCBIfam" id="TIGR03140">
    <property type="entry name" value="AhpF"/>
    <property type="match status" value="1"/>
</dbReference>
<dbReference type="PANTHER" id="PTHR48105">
    <property type="entry name" value="THIOREDOXIN REDUCTASE 1-RELATED-RELATED"/>
    <property type="match status" value="1"/>
</dbReference>
<dbReference type="Pfam" id="PF07992">
    <property type="entry name" value="Pyr_redox_2"/>
    <property type="match status" value="1"/>
</dbReference>
<dbReference type="Pfam" id="PF13192">
    <property type="entry name" value="Thioredoxin_3"/>
    <property type="match status" value="1"/>
</dbReference>
<dbReference type="PIRSF" id="PIRSF000238">
    <property type="entry name" value="AhpF"/>
    <property type="match status" value="1"/>
</dbReference>
<dbReference type="PRINTS" id="PR00368">
    <property type="entry name" value="FADPNR"/>
</dbReference>
<dbReference type="PRINTS" id="PR00469">
    <property type="entry name" value="PNDRDTASEII"/>
</dbReference>
<dbReference type="SUPFAM" id="SSF51905">
    <property type="entry name" value="FAD/NAD(P)-binding domain"/>
    <property type="match status" value="1"/>
</dbReference>
<dbReference type="SUPFAM" id="SSF52833">
    <property type="entry name" value="Thioredoxin-like"/>
    <property type="match status" value="2"/>
</dbReference>
<dbReference type="PROSITE" id="PS51354">
    <property type="entry name" value="GLUTAREDOXIN_2"/>
    <property type="match status" value="1"/>
</dbReference>
<dbReference type="PROSITE" id="PS00573">
    <property type="entry name" value="PYRIDINE_REDOX_2"/>
    <property type="match status" value="1"/>
</dbReference>
<feature type="chain" id="PRO_0000166776" description="Alkyl hydroperoxide reductase subunit F">
    <location>
        <begin position="1"/>
        <end position="520"/>
    </location>
</feature>
<feature type="binding site" evidence="1">
    <location>
        <begin position="213"/>
        <end position="228"/>
    </location>
    <ligand>
        <name>FAD</name>
        <dbReference type="ChEBI" id="CHEBI:57692"/>
    </ligand>
</feature>
<feature type="binding site" evidence="1">
    <location>
        <begin position="355"/>
        <end position="369"/>
    </location>
    <ligand>
        <name>NAD(+)</name>
        <dbReference type="ChEBI" id="CHEBI:57540"/>
    </ligand>
</feature>
<feature type="binding site" evidence="1">
    <location>
        <begin position="476"/>
        <end position="486"/>
    </location>
    <ligand>
        <name>FAD</name>
        <dbReference type="ChEBI" id="CHEBI:57692"/>
    </ligand>
</feature>
<feature type="disulfide bond" description="Redox-active" evidence="1">
    <location>
        <begin position="343"/>
        <end position="346"/>
    </location>
</feature>